<keyword id="KW-0028">Amino-acid biosynthesis</keyword>
<keyword id="KW-0057">Aromatic amino acid biosynthesis</keyword>
<keyword id="KW-0274">FAD</keyword>
<keyword id="KW-0285">Flavoprotein</keyword>
<keyword id="KW-0288">FMN</keyword>
<keyword id="KW-0456">Lyase</keyword>
<keyword id="KW-0521">NADP</keyword>
<keyword id="KW-1185">Reference proteome</keyword>
<reference key="1">
    <citation type="journal article" date="2009" name="J. Bacteriol.">
        <title>Genome sequence of the probiotic bacterium Bifidobacterium animalis subsp. lactis AD011.</title>
        <authorList>
            <person name="Kim J.F."/>
            <person name="Jeong H."/>
            <person name="Yu D.S."/>
            <person name="Choi S.-H."/>
            <person name="Hur C.-G."/>
            <person name="Park M.-S."/>
            <person name="Yoon S.H."/>
            <person name="Kim D.-W."/>
            <person name="Ji G.E."/>
            <person name="Park H.-S."/>
            <person name="Oh T.K."/>
        </authorList>
    </citation>
    <scope>NUCLEOTIDE SEQUENCE [LARGE SCALE GENOMIC DNA]</scope>
    <source>
        <strain>AD011</strain>
    </source>
</reference>
<dbReference type="EC" id="4.2.3.5" evidence="1"/>
<dbReference type="EMBL" id="CP001213">
    <property type="protein sequence ID" value="ACL29733.1"/>
    <property type="molecule type" value="Genomic_DNA"/>
</dbReference>
<dbReference type="RefSeq" id="WP_004217819.1">
    <property type="nucleotide sequence ID" value="NC_011835.1"/>
</dbReference>
<dbReference type="SMR" id="B8DUQ4"/>
<dbReference type="STRING" id="442563.BLA_1449"/>
<dbReference type="GeneID" id="29695780"/>
<dbReference type="KEGG" id="bla:BLA_1449"/>
<dbReference type="HOGENOM" id="CLU_034547_2_0_11"/>
<dbReference type="UniPathway" id="UPA00053">
    <property type="reaction ID" value="UER00090"/>
</dbReference>
<dbReference type="Proteomes" id="UP000002456">
    <property type="component" value="Chromosome"/>
</dbReference>
<dbReference type="GO" id="GO:0005829">
    <property type="term" value="C:cytosol"/>
    <property type="evidence" value="ECO:0007669"/>
    <property type="project" value="TreeGrafter"/>
</dbReference>
<dbReference type="GO" id="GO:0004107">
    <property type="term" value="F:chorismate synthase activity"/>
    <property type="evidence" value="ECO:0007669"/>
    <property type="project" value="UniProtKB-UniRule"/>
</dbReference>
<dbReference type="GO" id="GO:0010181">
    <property type="term" value="F:FMN binding"/>
    <property type="evidence" value="ECO:0007669"/>
    <property type="project" value="TreeGrafter"/>
</dbReference>
<dbReference type="GO" id="GO:0008652">
    <property type="term" value="P:amino acid biosynthetic process"/>
    <property type="evidence" value="ECO:0007669"/>
    <property type="project" value="UniProtKB-KW"/>
</dbReference>
<dbReference type="GO" id="GO:0009073">
    <property type="term" value="P:aromatic amino acid family biosynthetic process"/>
    <property type="evidence" value="ECO:0007669"/>
    <property type="project" value="UniProtKB-KW"/>
</dbReference>
<dbReference type="GO" id="GO:0009423">
    <property type="term" value="P:chorismate biosynthetic process"/>
    <property type="evidence" value="ECO:0007669"/>
    <property type="project" value="UniProtKB-UniRule"/>
</dbReference>
<dbReference type="CDD" id="cd07304">
    <property type="entry name" value="Chorismate_synthase"/>
    <property type="match status" value="1"/>
</dbReference>
<dbReference type="FunFam" id="3.60.150.10:FF:000002">
    <property type="entry name" value="Chorismate synthase"/>
    <property type="match status" value="1"/>
</dbReference>
<dbReference type="Gene3D" id="3.60.150.10">
    <property type="entry name" value="Chorismate synthase AroC"/>
    <property type="match status" value="1"/>
</dbReference>
<dbReference type="HAMAP" id="MF_00300">
    <property type="entry name" value="Chorismate_synth"/>
    <property type="match status" value="1"/>
</dbReference>
<dbReference type="InterPro" id="IPR000453">
    <property type="entry name" value="Chorismate_synth"/>
</dbReference>
<dbReference type="InterPro" id="IPR035904">
    <property type="entry name" value="Chorismate_synth_AroC_sf"/>
</dbReference>
<dbReference type="InterPro" id="IPR020541">
    <property type="entry name" value="Chorismate_synthase_CS"/>
</dbReference>
<dbReference type="NCBIfam" id="TIGR00033">
    <property type="entry name" value="aroC"/>
    <property type="match status" value="1"/>
</dbReference>
<dbReference type="NCBIfam" id="NF003793">
    <property type="entry name" value="PRK05382.1"/>
    <property type="match status" value="1"/>
</dbReference>
<dbReference type="PANTHER" id="PTHR21085">
    <property type="entry name" value="CHORISMATE SYNTHASE"/>
    <property type="match status" value="1"/>
</dbReference>
<dbReference type="PANTHER" id="PTHR21085:SF0">
    <property type="entry name" value="CHORISMATE SYNTHASE"/>
    <property type="match status" value="1"/>
</dbReference>
<dbReference type="Pfam" id="PF01264">
    <property type="entry name" value="Chorismate_synt"/>
    <property type="match status" value="1"/>
</dbReference>
<dbReference type="PIRSF" id="PIRSF001456">
    <property type="entry name" value="Chorismate_synth"/>
    <property type="match status" value="1"/>
</dbReference>
<dbReference type="SUPFAM" id="SSF103263">
    <property type="entry name" value="Chorismate synthase, AroC"/>
    <property type="match status" value="1"/>
</dbReference>
<dbReference type="PROSITE" id="PS00787">
    <property type="entry name" value="CHORISMATE_SYNTHASE_1"/>
    <property type="match status" value="1"/>
</dbReference>
<dbReference type="PROSITE" id="PS00789">
    <property type="entry name" value="CHORISMATE_SYNTHASE_3"/>
    <property type="match status" value="1"/>
</dbReference>
<sequence length="396" mass="42181">MLRWQTAGESHGEALVAMIEGMPSGVRVTSQDIRDALARRRLGYGRGARMKFEQDQVRLLTGVRFGSTLGSPIAIEIGNTEWPKWTEVMSADPLDHELAREGRNAPLSRPRPGHADLTGMRKYGFDDARPVLERSSARETASRVALGEVAALFLEQVAGIRTVSHVISIGGAGVESDNTPLPGPDDVAALDASPVRTLDKDAEERMVARIDEAKAKADTLGGVIEVIAYGVPAGIGTYVESDRRLDAALAAAVMGIQAIKGVEIGDGFLEAGRPGSMAHDEMVPGDDGCIARLSNRAGGIEGGMSNGQPIRVRAAMKPIPSIPRALRTVDITTGEAAQAINQRSDSTAVPAAAVVAEAMVRLTLAQHLLEKFGGDSIEETRRNIEGYLASWPEHMR</sequence>
<evidence type="ECO:0000255" key="1">
    <source>
        <dbReference type="HAMAP-Rule" id="MF_00300"/>
    </source>
</evidence>
<comment type="function">
    <text evidence="1">Catalyzes the anti-1,4-elimination of the C-3 phosphate and the C-6 proR hydrogen from 5-enolpyruvylshikimate-3-phosphate (EPSP) to yield chorismate, which is the branch point compound that serves as the starting substrate for the three terminal pathways of aromatic amino acid biosynthesis. This reaction introduces a second double bond into the aromatic ring system.</text>
</comment>
<comment type="catalytic activity">
    <reaction evidence="1">
        <text>5-O-(1-carboxyvinyl)-3-phosphoshikimate = chorismate + phosphate</text>
        <dbReference type="Rhea" id="RHEA:21020"/>
        <dbReference type="ChEBI" id="CHEBI:29748"/>
        <dbReference type="ChEBI" id="CHEBI:43474"/>
        <dbReference type="ChEBI" id="CHEBI:57701"/>
        <dbReference type="EC" id="4.2.3.5"/>
    </reaction>
</comment>
<comment type="cofactor">
    <cofactor evidence="1">
        <name>FMNH2</name>
        <dbReference type="ChEBI" id="CHEBI:57618"/>
    </cofactor>
    <text evidence="1">Reduced FMN (FMNH(2)).</text>
</comment>
<comment type="pathway">
    <text evidence="1">Metabolic intermediate biosynthesis; chorismate biosynthesis; chorismate from D-erythrose 4-phosphate and phosphoenolpyruvate: step 7/7.</text>
</comment>
<comment type="subunit">
    <text evidence="1">Homotetramer.</text>
</comment>
<comment type="similarity">
    <text evidence="1">Belongs to the chorismate synthase family.</text>
</comment>
<name>AROC_BIFA0</name>
<gene>
    <name evidence="1" type="primary">aroC</name>
    <name type="ordered locus">BLA_1449</name>
</gene>
<feature type="chain" id="PRO_1000132754" description="Chorismate synthase">
    <location>
        <begin position="1"/>
        <end position="396"/>
    </location>
</feature>
<feature type="binding site" evidence="1">
    <location>
        <position position="40"/>
    </location>
    <ligand>
        <name>NADP(+)</name>
        <dbReference type="ChEBI" id="CHEBI:58349"/>
    </ligand>
</feature>
<feature type="binding site" evidence="1">
    <location>
        <position position="46"/>
    </location>
    <ligand>
        <name>NADP(+)</name>
        <dbReference type="ChEBI" id="CHEBI:58349"/>
    </ligand>
</feature>
<feature type="binding site" evidence="1">
    <location>
        <begin position="134"/>
        <end position="136"/>
    </location>
    <ligand>
        <name>FMN</name>
        <dbReference type="ChEBI" id="CHEBI:58210"/>
    </ligand>
</feature>
<feature type="binding site" evidence="1">
    <location>
        <begin position="257"/>
        <end position="258"/>
    </location>
    <ligand>
        <name>FMN</name>
        <dbReference type="ChEBI" id="CHEBI:58210"/>
    </ligand>
</feature>
<feature type="binding site" evidence="1">
    <location>
        <position position="302"/>
    </location>
    <ligand>
        <name>FMN</name>
        <dbReference type="ChEBI" id="CHEBI:58210"/>
    </ligand>
</feature>
<feature type="binding site" evidence="1">
    <location>
        <begin position="317"/>
        <end position="321"/>
    </location>
    <ligand>
        <name>FMN</name>
        <dbReference type="ChEBI" id="CHEBI:58210"/>
    </ligand>
</feature>
<feature type="binding site" evidence="1">
    <location>
        <position position="343"/>
    </location>
    <ligand>
        <name>FMN</name>
        <dbReference type="ChEBI" id="CHEBI:58210"/>
    </ligand>
</feature>
<protein>
    <recommendedName>
        <fullName evidence="1">Chorismate synthase</fullName>
        <shortName evidence="1">CS</shortName>
        <ecNumber evidence="1">4.2.3.5</ecNumber>
    </recommendedName>
    <alternativeName>
        <fullName evidence="1">5-enolpyruvylshikimate-3-phosphate phospholyase</fullName>
    </alternativeName>
</protein>
<organism>
    <name type="scientific">Bifidobacterium animalis subsp. lactis (strain AD011)</name>
    <dbReference type="NCBI Taxonomy" id="442563"/>
    <lineage>
        <taxon>Bacteria</taxon>
        <taxon>Bacillati</taxon>
        <taxon>Actinomycetota</taxon>
        <taxon>Actinomycetes</taxon>
        <taxon>Bifidobacteriales</taxon>
        <taxon>Bifidobacteriaceae</taxon>
        <taxon>Bifidobacterium</taxon>
    </lineage>
</organism>
<accession>B8DUQ4</accession>
<proteinExistence type="inferred from homology"/>